<name>SYFB_PSESM</name>
<protein>
    <recommendedName>
        <fullName evidence="1">Phenylalanine--tRNA ligase beta subunit</fullName>
        <ecNumber evidence="1">6.1.1.20</ecNumber>
    </recommendedName>
    <alternativeName>
        <fullName evidence="1">Phenylalanyl-tRNA synthetase beta subunit</fullName>
        <shortName evidence="1">PheRS</shortName>
    </alternativeName>
</protein>
<organism>
    <name type="scientific">Pseudomonas syringae pv. tomato (strain ATCC BAA-871 / DC3000)</name>
    <dbReference type="NCBI Taxonomy" id="223283"/>
    <lineage>
        <taxon>Bacteria</taxon>
        <taxon>Pseudomonadati</taxon>
        <taxon>Pseudomonadota</taxon>
        <taxon>Gammaproteobacteria</taxon>
        <taxon>Pseudomonadales</taxon>
        <taxon>Pseudomonadaceae</taxon>
        <taxon>Pseudomonas</taxon>
    </lineage>
</organism>
<accession>Q883H7</accession>
<gene>
    <name evidence="1" type="primary">pheT</name>
    <name type="ordered locus">PSPTO_2383</name>
</gene>
<feature type="chain" id="PRO_0000126934" description="Phenylalanine--tRNA ligase beta subunit">
    <location>
        <begin position="1"/>
        <end position="792"/>
    </location>
</feature>
<feature type="domain" description="tRNA-binding" evidence="1">
    <location>
        <begin position="39"/>
        <end position="147"/>
    </location>
</feature>
<feature type="domain" description="B5" evidence="1">
    <location>
        <begin position="400"/>
        <end position="476"/>
    </location>
</feature>
<feature type="domain" description="FDX-ACB" evidence="1">
    <location>
        <begin position="698"/>
        <end position="791"/>
    </location>
</feature>
<feature type="binding site" evidence="1">
    <location>
        <position position="454"/>
    </location>
    <ligand>
        <name>Mg(2+)</name>
        <dbReference type="ChEBI" id="CHEBI:18420"/>
        <note>shared with alpha subunit</note>
    </ligand>
</feature>
<feature type="binding site" evidence="1">
    <location>
        <position position="460"/>
    </location>
    <ligand>
        <name>Mg(2+)</name>
        <dbReference type="ChEBI" id="CHEBI:18420"/>
        <note>shared with alpha subunit</note>
    </ligand>
</feature>
<feature type="binding site" evidence="1">
    <location>
        <position position="463"/>
    </location>
    <ligand>
        <name>Mg(2+)</name>
        <dbReference type="ChEBI" id="CHEBI:18420"/>
        <note>shared with alpha subunit</note>
    </ligand>
</feature>
<feature type="binding site" evidence="1">
    <location>
        <position position="464"/>
    </location>
    <ligand>
        <name>Mg(2+)</name>
        <dbReference type="ChEBI" id="CHEBI:18420"/>
        <note>shared with alpha subunit</note>
    </ligand>
</feature>
<proteinExistence type="inferred from homology"/>
<sequence length="792" mass="86521">MKFSEQWLRGWVSPQVSRDELVARLSMAGLEVDSVTLAAGIFTGVVVGEVLSTEQHPDADKLRVCQVSNGRETFQVVCGAPNVRPGLKIPFAMIGSELPGDFKIKKAKLRGVESNGMLCSAAELQAGEGNDGLMELAADAPVGQDIRVYLGLDDASIEVDLTPNRGDCLSVAGLAREVGALYAADVTRPQIAAVSAVHDEVRPVEVLAPAACPRYLGRVIRNVDLSRPTPLWMVERLRRSDVRSIDAAVDITNYVMLELGQPLHAFDLAEINGGIRVRMAEEGEKLVLLDGQEVSLRADTLVIADHQRALAIAGVMGGEHSGVTAGTRDIFLESAFFDTISVAGKARSYGLHTDASHRYERGVDWQLAREAMERATGLLLDITGGEAGPVIEVVSEQHLPSIAPVTLRASRVEQMLGLVIENAEIERLLTGLGLTVSAEADGQWRVDVPSHRFDISLEVDLIEELARLYGYNRLPVRYPQARLAPQANAEAKGDLPELRRLLVARGYQEAITYSFIDPKWFELFSPGVKPLLLANPISNDMAAMRASLWPGLVKALQHNLNRQQDRVRMFESGLRFVGQLDGLKQEPMLAGVVCGSRLPEGWAQGRDAVDFFDVKADVEAVLGFAGALGEFTFTPGQHPALHPGQTARILRDGREVGFLGAIHPELSKNLGLDRPVFVFELVLAEVATGRLPKFHELSRFPEVRRDLALLADRDVSASAVLDVIRENAGEWLTDLRLFDVYQGKGIDPHRKSLAVGLTWQHPSRTLNDDEVNATTLAILTSLEERLNATLRK</sequence>
<comment type="catalytic activity">
    <reaction evidence="1">
        <text>tRNA(Phe) + L-phenylalanine + ATP = L-phenylalanyl-tRNA(Phe) + AMP + diphosphate + H(+)</text>
        <dbReference type="Rhea" id="RHEA:19413"/>
        <dbReference type="Rhea" id="RHEA-COMP:9668"/>
        <dbReference type="Rhea" id="RHEA-COMP:9699"/>
        <dbReference type="ChEBI" id="CHEBI:15378"/>
        <dbReference type="ChEBI" id="CHEBI:30616"/>
        <dbReference type="ChEBI" id="CHEBI:33019"/>
        <dbReference type="ChEBI" id="CHEBI:58095"/>
        <dbReference type="ChEBI" id="CHEBI:78442"/>
        <dbReference type="ChEBI" id="CHEBI:78531"/>
        <dbReference type="ChEBI" id="CHEBI:456215"/>
        <dbReference type="EC" id="6.1.1.20"/>
    </reaction>
</comment>
<comment type="cofactor">
    <cofactor evidence="1">
        <name>Mg(2+)</name>
        <dbReference type="ChEBI" id="CHEBI:18420"/>
    </cofactor>
    <text evidence="1">Binds 2 magnesium ions per tetramer.</text>
</comment>
<comment type="subunit">
    <text evidence="1">Tetramer of two alpha and two beta subunits.</text>
</comment>
<comment type="subcellular location">
    <subcellularLocation>
        <location evidence="1">Cytoplasm</location>
    </subcellularLocation>
</comment>
<comment type="similarity">
    <text evidence="1">Belongs to the phenylalanyl-tRNA synthetase beta subunit family. Type 1 subfamily.</text>
</comment>
<keyword id="KW-0030">Aminoacyl-tRNA synthetase</keyword>
<keyword id="KW-0067">ATP-binding</keyword>
<keyword id="KW-0963">Cytoplasm</keyword>
<keyword id="KW-0436">Ligase</keyword>
<keyword id="KW-0460">Magnesium</keyword>
<keyword id="KW-0479">Metal-binding</keyword>
<keyword id="KW-0547">Nucleotide-binding</keyword>
<keyword id="KW-0648">Protein biosynthesis</keyword>
<keyword id="KW-1185">Reference proteome</keyword>
<keyword id="KW-0694">RNA-binding</keyword>
<keyword id="KW-0820">tRNA-binding</keyword>
<reference key="1">
    <citation type="journal article" date="2003" name="Proc. Natl. Acad. Sci. U.S.A.">
        <title>The complete genome sequence of the Arabidopsis and tomato pathogen Pseudomonas syringae pv. tomato DC3000.</title>
        <authorList>
            <person name="Buell C.R."/>
            <person name="Joardar V."/>
            <person name="Lindeberg M."/>
            <person name="Selengut J."/>
            <person name="Paulsen I.T."/>
            <person name="Gwinn M.L."/>
            <person name="Dodson R.J."/>
            <person name="DeBoy R.T."/>
            <person name="Durkin A.S."/>
            <person name="Kolonay J.F."/>
            <person name="Madupu R."/>
            <person name="Daugherty S.C."/>
            <person name="Brinkac L.M."/>
            <person name="Beanan M.J."/>
            <person name="Haft D.H."/>
            <person name="Nelson W.C."/>
            <person name="Davidsen T.M."/>
            <person name="Zafar N."/>
            <person name="Zhou L."/>
            <person name="Liu J."/>
            <person name="Yuan Q."/>
            <person name="Khouri H.M."/>
            <person name="Fedorova N.B."/>
            <person name="Tran B."/>
            <person name="Russell D."/>
            <person name="Berry K.J."/>
            <person name="Utterback T.R."/>
            <person name="Van Aken S.E."/>
            <person name="Feldblyum T.V."/>
            <person name="D'Ascenzo M."/>
            <person name="Deng W.-L."/>
            <person name="Ramos A.R."/>
            <person name="Alfano J.R."/>
            <person name="Cartinhour S."/>
            <person name="Chatterjee A.K."/>
            <person name="Delaney T.P."/>
            <person name="Lazarowitz S.G."/>
            <person name="Martin G.B."/>
            <person name="Schneider D.J."/>
            <person name="Tang X."/>
            <person name="Bender C.L."/>
            <person name="White O."/>
            <person name="Fraser C.M."/>
            <person name="Collmer A."/>
        </authorList>
    </citation>
    <scope>NUCLEOTIDE SEQUENCE [LARGE SCALE GENOMIC DNA]</scope>
    <source>
        <strain>ATCC BAA-871 / DC3000</strain>
    </source>
</reference>
<dbReference type="EC" id="6.1.1.20" evidence="1"/>
<dbReference type="EMBL" id="AE016853">
    <property type="protein sequence ID" value="AAO55894.1"/>
    <property type="molecule type" value="Genomic_DNA"/>
</dbReference>
<dbReference type="RefSeq" id="NP_792199.1">
    <property type="nucleotide sequence ID" value="NC_004578.1"/>
</dbReference>
<dbReference type="RefSeq" id="WP_011103972.1">
    <property type="nucleotide sequence ID" value="NC_004578.1"/>
</dbReference>
<dbReference type="SMR" id="Q883H7"/>
<dbReference type="STRING" id="223283.PSPTO_2383"/>
<dbReference type="GeneID" id="1184034"/>
<dbReference type="KEGG" id="pst:PSPTO_2383"/>
<dbReference type="PATRIC" id="fig|223283.9.peg.2418"/>
<dbReference type="eggNOG" id="COG0072">
    <property type="taxonomic scope" value="Bacteria"/>
</dbReference>
<dbReference type="HOGENOM" id="CLU_016891_0_0_6"/>
<dbReference type="OrthoDB" id="9805455at2"/>
<dbReference type="PhylomeDB" id="Q883H7"/>
<dbReference type="Proteomes" id="UP000002515">
    <property type="component" value="Chromosome"/>
</dbReference>
<dbReference type="GO" id="GO:0009328">
    <property type="term" value="C:phenylalanine-tRNA ligase complex"/>
    <property type="evidence" value="ECO:0007669"/>
    <property type="project" value="TreeGrafter"/>
</dbReference>
<dbReference type="GO" id="GO:0005524">
    <property type="term" value="F:ATP binding"/>
    <property type="evidence" value="ECO:0007669"/>
    <property type="project" value="UniProtKB-UniRule"/>
</dbReference>
<dbReference type="GO" id="GO:0000287">
    <property type="term" value="F:magnesium ion binding"/>
    <property type="evidence" value="ECO:0007669"/>
    <property type="project" value="UniProtKB-UniRule"/>
</dbReference>
<dbReference type="GO" id="GO:0004826">
    <property type="term" value="F:phenylalanine-tRNA ligase activity"/>
    <property type="evidence" value="ECO:0007669"/>
    <property type="project" value="UniProtKB-UniRule"/>
</dbReference>
<dbReference type="GO" id="GO:0000049">
    <property type="term" value="F:tRNA binding"/>
    <property type="evidence" value="ECO:0007669"/>
    <property type="project" value="UniProtKB-KW"/>
</dbReference>
<dbReference type="GO" id="GO:0006432">
    <property type="term" value="P:phenylalanyl-tRNA aminoacylation"/>
    <property type="evidence" value="ECO:0007669"/>
    <property type="project" value="UniProtKB-UniRule"/>
</dbReference>
<dbReference type="CDD" id="cd00769">
    <property type="entry name" value="PheRS_beta_core"/>
    <property type="match status" value="1"/>
</dbReference>
<dbReference type="CDD" id="cd02796">
    <property type="entry name" value="tRNA_bind_bactPheRS"/>
    <property type="match status" value="1"/>
</dbReference>
<dbReference type="FunFam" id="2.40.50.140:FF:000045">
    <property type="entry name" value="Phenylalanine--tRNA ligase beta subunit"/>
    <property type="match status" value="1"/>
</dbReference>
<dbReference type="FunFam" id="3.30.56.10:FF:000002">
    <property type="entry name" value="Phenylalanine--tRNA ligase beta subunit"/>
    <property type="match status" value="1"/>
</dbReference>
<dbReference type="FunFam" id="3.30.70.380:FF:000001">
    <property type="entry name" value="Phenylalanine--tRNA ligase beta subunit"/>
    <property type="match status" value="1"/>
</dbReference>
<dbReference type="FunFam" id="3.30.930.10:FF:000022">
    <property type="entry name" value="Phenylalanine--tRNA ligase beta subunit"/>
    <property type="match status" value="1"/>
</dbReference>
<dbReference type="FunFam" id="3.50.40.10:FF:000001">
    <property type="entry name" value="Phenylalanine--tRNA ligase beta subunit"/>
    <property type="match status" value="1"/>
</dbReference>
<dbReference type="Gene3D" id="3.30.56.10">
    <property type="match status" value="2"/>
</dbReference>
<dbReference type="Gene3D" id="3.30.930.10">
    <property type="entry name" value="Bira Bifunctional Protein, Domain 2"/>
    <property type="match status" value="1"/>
</dbReference>
<dbReference type="Gene3D" id="3.30.70.380">
    <property type="entry name" value="Ferrodoxin-fold anticodon-binding domain"/>
    <property type="match status" value="1"/>
</dbReference>
<dbReference type="Gene3D" id="2.40.50.140">
    <property type="entry name" value="Nucleic acid-binding proteins"/>
    <property type="match status" value="1"/>
</dbReference>
<dbReference type="Gene3D" id="3.50.40.10">
    <property type="entry name" value="Phenylalanyl-trna Synthetase, Chain B, domain 3"/>
    <property type="match status" value="1"/>
</dbReference>
<dbReference type="HAMAP" id="MF_00283">
    <property type="entry name" value="Phe_tRNA_synth_beta1"/>
    <property type="match status" value="1"/>
</dbReference>
<dbReference type="InterPro" id="IPR045864">
    <property type="entry name" value="aa-tRNA-synth_II/BPL/LPL"/>
</dbReference>
<dbReference type="InterPro" id="IPR005146">
    <property type="entry name" value="B3/B4_tRNA-bd"/>
</dbReference>
<dbReference type="InterPro" id="IPR009061">
    <property type="entry name" value="DNA-bd_dom_put_sf"/>
</dbReference>
<dbReference type="InterPro" id="IPR005121">
    <property type="entry name" value="Fdx_antiC-bd"/>
</dbReference>
<dbReference type="InterPro" id="IPR036690">
    <property type="entry name" value="Fdx_antiC-bd_sf"/>
</dbReference>
<dbReference type="InterPro" id="IPR012340">
    <property type="entry name" value="NA-bd_OB-fold"/>
</dbReference>
<dbReference type="InterPro" id="IPR045060">
    <property type="entry name" value="Phe-tRNA-ligase_IIc_bsu"/>
</dbReference>
<dbReference type="InterPro" id="IPR004532">
    <property type="entry name" value="Phe-tRNA-ligase_IIc_bsu_bact"/>
</dbReference>
<dbReference type="InterPro" id="IPR020825">
    <property type="entry name" value="Phe-tRNA_synthase-like_B3/B4"/>
</dbReference>
<dbReference type="InterPro" id="IPR041616">
    <property type="entry name" value="PheRS_beta_core"/>
</dbReference>
<dbReference type="InterPro" id="IPR002547">
    <property type="entry name" value="tRNA-bd_dom"/>
</dbReference>
<dbReference type="InterPro" id="IPR033714">
    <property type="entry name" value="tRNA_bind_bactPheRS"/>
</dbReference>
<dbReference type="InterPro" id="IPR005147">
    <property type="entry name" value="tRNA_synthase_B5-dom"/>
</dbReference>
<dbReference type="NCBIfam" id="TIGR00472">
    <property type="entry name" value="pheT_bact"/>
    <property type="match status" value="1"/>
</dbReference>
<dbReference type="NCBIfam" id="NF045760">
    <property type="entry name" value="YtpR"/>
    <property type="match status" value="1"/>
</dbReference>
<dbReference type="PANTHER" id="PTHR10947:SF0">
    <property type="entry name" value="PHENYLALANINE--TRNA LIGASE BETA SUBUNIT"/>
    <property type="match status" value="1"/>
</dbReference>
<dbReference type="PANTHER" id="PTHR10947">
    <property type="entry name" value="PHENYLALANYL-TRNA SYNTHETASE BETA CHAIN AND LEUCINE-RICH REPEAT-CONTAINING PROTEIN 47"/>
    <property type="match status" value="1"/>
</dbReference>
<dbReference type="Pfam" id="PF03483">
    <property type="entry name" value="B3_4"/>
    <property type="match status" value="1"/>
</dbReference>
<dbReference type="Pfam" id="PF03484">
    <property type="entry name" value="B5"/>
    <property type="match status" value="1"/>
</dbReference>
<dbReference type="Pfam" id="PF03147">
    <property type="entry name" value="FDX-ACB"/>
    <property type="match status" value="1"/>
</dbReference>
<dbReference type="Pfam" id="PF01588">
    <property type="entry name" value="tRNA_bind"/>
    <property type="match status" value="1"/>
</dbReference>
<dbReference type="Pfam" id="PF17759">
    <property type="entry name" value="tRNA_synthFbeta"/>
    <property type="match status" value="1"/>
</dbReference>
<dbReference type="SMART" id="SM00873">
    <property type="entry name" value="B3_4"/>
    <property type="match status" value="1"/>
</dbReference>
<dbReference type="SMART" id="SM00874">
    <property type="entry name" value="B5"/>
    <property type="match status" value="1"/>
</dbReference>
<dbReference type="SMART" id="SM00896">
    <property type="entry name" value="FDX-ACB"/>
    <property type="match status" value="1"/>
</dbReference>
<dbReference type="SUPFAM" id="SSF54991">
    <property type="entry name" value="Anticodon-binding domain of PheRS"/>
    <property type="match status" value="1"/>
</dbReference>
<dbReference type="SUPFAM" id="SSF55681">
    <property type="entry name" value="Class II aaRS and biotin synthetases"/>
    <property type="match status" value="1"/>
</dbReference>
<dbReference type="SUPFAM" id="SSF50249">
    <property type="entry name" value="Nucleic acid-binding proteins"/>
    <property type="match status" value="1"/>
</dbReference>
<dbReference type="SUPFAM" id="SSF56037">
    <property type="entry name" value="PheT/TilS domain"/>
    <property type="match status" value="1"/>
</dbReference>
<dbReference type="SUPFAM" id="SSF46955">
    <property type="entry name" value="Putative DNA-binding domain"/>
    <property type="match status" value="1"/>
</dbReference>
<dbReference type="PROSITE" id="PS51483">
    <property type="entry name" value="B5"/>
    <property type="match status" value="1"/>
</dbReference>
<dbReference type="PROSITE" id="PS51447">
    <property type="entry name" value="FDX_ACB"/>
    <property type="match status" value="1"/>
</dbReference>
<dbReference type="PROSITE" id="PS50886">
    <property type="entry name" value="TRBD"/>
    <property type="match status" value="1"/>
</dbReference>
<evidence type="ECO:0000255" key="1">
    <source>
        <dbReference type="HAMAP-Rule" id="MF_00283"/>
    </source>
</evidence>